<accession>O26898</accession>
<keyword id="KW-0002">3D-structure</keyword>
<keyword id="KW-0963">Cytoplasm</keyword>
<keyword id="KW-1015">Disulfide bond</keyword>
<keyword id="KW-0249">Electron transport</keyword>
<keyword id="KW-0676">Redox-active center</keyword>
<keyword id="KW-1185">Reference proteome</keyword>
<keyword id="KW-0813">Transport</keyword>
<organism>
    <name type="scientific">Methanothermobacter thermautotrophicus (strain ATCC 29096 / DSM 1053 / JCM 10044 / NBRC 100330 / Delta H)</name>
    <name type="common">Methanobacterium thermoautotrophicum</name>
    <dbReference type="NCBI Taxonomy" id="187420"/>
    <lineage>
        <taxon>Archaea</taxon>
        <taxon>Methanobacteriati</taxon>
        <taxon>Methanobacteriota</taxon>
        <taxon>Methanomada group</taxon>
        <taxon>Methanobacteria</taxon>
        <taxon>Methanobacteriales</taxon>
        <taxon>Methanobacteriaceae</taxon>
        <taxon>Methanothermobacter</taxon>
    </lineage>
</organism>
<dbReference type="EMBL" id="AE000666">
    <property type="protein sequence ID" value="AAB85307.1"/>
    <property type="molecule type" value="Genomic_DNA"/>
</dbReference>
<dbReference type="PIR" id="G69207">
    <property type="entry name" value="G69207"/>
</dbReference>
<dbReference type="RefSeq" id="WP_010876442.1">
    <property type="nucleotide sequence ID" value="NC_000916.1"/>
</dbReference>
<dbReference type="PDB" id="1NHO">
    <property type="method" value="NMR"/>
    <property type="chains" value="A=1-85"/>
</dbReference>
<dbReference type="PDBsum" id="1NHO"/>
<dbReference type="BMRB" id="O26898"/>
<dbReference type="SMR" id="O26898"/>
<dbReference type="FunCoup" id="O26898">
    <property type="interactions" value="4"/>
</dbReference>
<dbReference type="STRING" id="187420.MTH_807"/>
<dbReference type="PaxDb" id="187420-MTH_807"/>
<dbReference type="EnsemblBacteria" id="AAB85307">
    <property type="protein sequence ID" value="AAB85307"/>
    <property type="gene ID" value="MTH_807"/>
</dbReference>
<dbReference type="KEGG" id="mth:MTH_807"/>
<dbReference type="PATRIC" id="fig|187420.15.peg.792"/>
<dbReference type="HOGENOM" id="CLU_090389_20_2_2"/>
<dbReference type="InParanoid" id="O26898"/>
<dbReference type="EvolutionaryTrace" id="O26898"/>
<dbReference type="Proteomes" id="UP000005223">
    <property type="component" value="Chromosome"/>
</dbReference>
<dbReference type="GO" id="GO:0005737">
    <property type="term" value="C:cytoplasm"/>
    <property type="evidence" value="ECO:0007669"/>
    <property type="project" value="UniProtKB-SubCell"/>
</dbReference>
<dbReference type="GO" id="GO:0009055">
    <property type="term" value="F:electron transfer activity"/>
    <property type="evidence" value="ECO:0007669"/>
    <property type="project" value="InterPro"/>
</dbReference>
<dbReference type="GO" id="GO:0015035">
    <property type="term" value="F:protein-disulfide reductase activity"/>
    <property type="evidence" value="ECO:0007669"/>
    <property type="project" value="InterPro"/>
</dbReference>
<dbReference type="GO" id="GO:0045454">
    <property type="term" value="P:cell redox homeostasis"/>
    <property type="evidence" value="ECO:0007669"/>
    <property type="project" value="InterPro"/>
</dbReference>
<dbReference type="CDD" id="cd02973">
    <property type="entry name" value="TRX_GRX_like"/>
    <property type="match status" value="1"/>
</dbReference>
<dbReference type="Gene3D" id="3.40.30.10">
    <property type="entry name" value="Glutaredoxin"/>
    <property type="match status" value="1"/>
</dbReference>
<dbReference type="InterPro" id="IPR011767">
    <property type="entry name" value="GLR_AS"/>
</dbReference>
<dbReference type="InterPro" id="IPR004502">
    <property type="entry name" value="Thio_glut"/>
</dbReference>
<dbReference type="InterPro" id="IPR012336">
    <property type="entry name" value="Thioredoxin-like_fold"/>
</dbReference>
<dbReference type="InterPro" id="IPR036249">
    <property type="entry name" value="Thioredoxin-like_sf"/>
</dbReference>
<dbReference type="InterPro" id="IPR013766">
    <property type="entry name" value="Thioredoxin_domain"/>
</dbReference>
<dbReference type="NCBIfam" id="TIGR00411">
    <property type="entry name" value="redox_disulf_1"/>
    <property type="match status" value="1"/>
</dbReference>
<dbReference type="PANTHER" id="PTHR37170:SF1">
    <property type="entry name" value="GLUTAREDOXIN-LIKE PROTEIN"/>
    <property type="match status" value="1"/>
</dbReference>
<dbReference type="PANTHER" id="PTHR37170">
    <property type="entry name" value="GLUTAREDOXIN-RELATED"/>
    <property type="match status" value="1"/>
</dbReference>
<dbReference type="Pfam" id="PF13192">
    <property type="entry name" value="Thioredoxin_3"/>
    <property type="match status" value="1"/>
</dbReference>
<dbReference type="SUPFAM" id="SSF52833">
    <property type="entry name" value="Thioredoxin-like"/>
    <property type="match status" value="1"/>
</dbReference>
<dbReference type="PROSITE" id="PS00195">
    <property type="entry name" value="GLUTAREDOXIN_1"/>
    <property type="match status" value="1"/>
</dbReference>
<dbReference type="PROSITE" id="PS51354">
    <property type="entry name" value="GLUTAREDOXIN_2"/>
    <property type="match status" value="1"/>
</dbReference>
<feature type="initiator methionine" description="Removed" evidence="1">
    <location>
        <position position="1"/>
    </location>
</feature>
<feature type="chain" id="PRO_0000141647" description="Probable Thioredoxin">
    <location>
        <begin position="2"/>
        <end position="85"/>
    </location>
</feature>
<feature type="domain" description="Glutaredoxin" evidence="2">
    <location>
        <begin position="2"/>
        <end position="85"/>
    </location>
</feature>
<feature type="disulfide bond" description="Redox-active" evidence="1">
    <location>
        <begin position="13"/>
        <end position="16"/>
    </location>
</feature>
<feature type="strand" evidence="4">
    <location>
        <begin position="5"/>
        <end position="9"/>
    </location>
</feature>
<feature type="strand" evidence="4">
    <location>
        <begin position="11"/>
        <end position="13"/>
    </location>
</feature>
<feature type="helix" evidence="4">
    <location>
        <begin position="19"/>
        <end position="30"/>
    </location>
</feature>
<feature type="strand" evidence="4">
    <location>
        <begin position="36"/>
        <end position="39"/>
    </location>
</feature>
<feature type="turn" evidence="4">
    <location>
        <begin position="41"/>
        <end position="43"/>
    </location>
</feature>
<feature type="helix" evidence="4">
    <location>
        <begin position="45"/>
        <end position="50"/>
    </location>
</feature>
<feature type="strand" evidence="4">
    <location>
        <begin position="56"/>
        <end position="60"/>
    </location>
</feature>
<feature type="strand" evidence="4">
    <location>
        <begin position="66"/>
        <end position="68"/>
    </location>
</feature>
<feature type="helix" evidence="4">
    <location>
        <begin position="74"/>
        <end position="83"/>
    </location>
</feature>
<protein>
    <recommendedName>
        <fullName>Probable Thioredoxin</fullName>
    </recommendedName>
    <alternativeName>
        <fullName>Glutaredoxin-like protein</fullName>
    </alternativeName>
</protein>
<proteinExistence type="evidence at protein level"/>
<comment type="function">
    <text evidence="1">Acts to maintain redox homeostasis; functions as a protein disulfide reductase.</text>
</comment>
<comment type="subcellular location">
    <subcellularLocation>
        <location evidence="1">Cytoplasm</location>
    </subcellularLocation>
</comment>
<comment type="similarity">
    <text evidence="3">Belongs to the glutaredoxin family.</text>
</comment>
<reference key="1">
    <citation type="journal article" date="1997" name="J. Bacteriol.">
        <title>Complete genome sequence of Methanobacterium thermoautotrophicum deltaH: functional analysis and comparative genomics.</title>
        <authorList>
            <person name="Smith D.R."/>
            <person name="Doucette-Stamm L.A."/>
            <person name="Deloughery C."/>
            <person name="Lee H.-M."/>
            <person name="Dubois J."/>
            <person name="Aldredge T."/>
            <person name="Bashirzadeh R."/>
            <person name="Blakely D."/>
            <person name="Cook R."/>
            <person name="Gilbert K."/>
            <person name="Harrison D."/>
            <person name="Hoang L."/>
            <person name="Keagle P."/>
            <person name="Lumm W."/>
            <person name="Pothier B."/>
            <person name="Qiu D."/>
            <person name="Spadafora R."/>
            <person name="Vicare R."/>
            <person name="Wang Y."/>
            <person name="Wierzbowski J."/>
            <person name="Gibson R."/>
            <person name="Jiwani N."/>
            <person name="Caruso A."/>
            <person name="Bush D."/>
            <person name="Safer H."/>
            <person name="Patwell D."/>
            <person name="Prabhakar S."/>
            <person name="McDougall S."/>
            <person name="Shimer G."/>
            <person name="Goyal A."/>
            <person name="Pietrovski S."/>
            <person name="Church G.M."/>
            <person name="Daniels C.J."/>
            <person name="Mao J.-I."/>
            <person name="Rice P."/>
            <person name="Noelling J."/>
            <person name="Reeve J.N."/>
        </authorList>
    </citation>
    <scope>NUCLEOTIDE SEQUENCE [LARGE SCALE GENOMIC DNA]</scope>
    <source>
        <strain>ATCC 29096 / DSM 1053 / JCM 10044 / NBRC 100330 / Delta H</strain>
    </source>
</reference>
<evidence type="ECO:0000250" key="1"/>
<evidence type="ECO:0000255" key="2">
    <source>
        <dbReference type="PROSITE-ProRule" id="PRU00686"/>
    </source>
</evidence>
<evidence type="ECO:0000305" key="3"/>
<evidence type="ECO:0007829" key="4">
    <source>
        <dbReference type="PDB" id="1NHO"/>
    </source>
</evidence>
<gene>
    <name type="ordered locus">MTH_807</name>
</gene>
<name>THIO_METTH</name>
<sequence length="85" mass="9481">MVVNIEVFTSPTCPYCPMAIEVVDEAKKEFGDKIDVEKIDIMVDREKAIEYGLMAVPAIAINGVVRFVGAPSREELFEAINDEME</sequence>